<proteinExistence type="evidence at protein level"/>
<gene>
    <name evidence="22" type="primary">BCKDHA</name>
</gene>
<accession>P12694</accession>
<accession>B4DP47</accession>
<accession>E7EW46</accession>
<accession>Q16034</accession>
<accession>Q16472</accession>
<organism>
    <name type="scientific">Homo sapiens</name>
    <name type="common">Human</name>
    <dbReference type="NCBI Taxonomy" id="9606"/>
    <lineage>
        <taxon>Eukaryota</taxon>
        <taxon>Metazoa</taxon>
        <taxon>Chordata</taxon>
        <taxon>Craniata</taxon>
        <taxon>Vertebrata</taxon>
        <taxon>Euteleostomi</taxon>
        <taxon>Mammalia</taxon>
        <taxon>Eutheria</taxon>
        <taxon>Euarchontoglires</taxon>
        <taxon>Primates</taxon>
        <taxon>Haplorrhini</taxon>
        <taxon>Catarrhini</taxon>
        <taxon>Hominidae</taxon>
        <taxon>Homo</taxon>
    </lineage>
</organism>
<name>ODBA_HUMAN</name>
<keyword id="KW-0002">3D-structure</keyword>
<keyword id="KW-0007">Acetylation</keyword>
<keyword id="KW-0025">Alternative splicing</keyword>
<keyword id="KW-0903">Direct protein sequencing</keyword>
<keyword id="KW-0225">Disease variant</keyword>
<keyword id="KW-0466">Maple syrup urine disease</keyword>
<keyword id="KW-0479">Metal-binding</keyword>
<keyword id="KW-0496">Mitochondrion</keyword>
<keyword id="KW-0560">Oxidoreductase</keyword>
<keyword id="KW-0597">Phosphoprotein</keyword>
<keyword id="KW-0630">Potassium</keyword>
<keyword id="KW-1267">Proteomics identification</keyword>
<keyword id="KW-1185">Reference proteome</keyword>
<keyword id="KW-0786">Thiamine pyrophosphate</keyword>
<keyword id="KW-0809">Transit peptide</keyword>
<dbReference type="EC" id="1.2.4.4" evidence="3 12 16"/>
<dbReference type="EMBL" id="Z14093">
    <property type="protein sequence ID" value="CAA78475.1"/>
    <property type="molecule type" value="mRNA"/>
</dbReference>
<dbReference type="EMBL" id="AK298188">
    <property type="protein sequence ID" value="BAG60459.1"/>
    <property type="molecule type" value="mRNA"/>
</dbReference>
<dbReference type="EMBL" id="AC011462">
    <property type="status" value="NOT_ANNOTATED_CDS"/>
    <property type="molecule type" value="Genomic_DNA"/>
</dbReference>
<dbReference type="EMBL" id="BC007878">
    <property type="protein sequence ID" value="AAH07878.1"/>
    <property type="molecule type" value="mRNA"/>
</dbReference>
<dbReference type="EMBL" id="BC008933">
    <property type="protein sequence ID" value="AAH08933.1"/>
    <property type="molecule type" value="mRNA"/>
</dbReference>
<dbReference type="EMBL" id="BC023983">
    <property type="protein sequence ID" value="AAH23983.1"/>
    <property type="molecule type" value="mRNA"/>
</dbReference>
<dbReference type="EMBL" id="J04474">
    <property type="protein sequence ID" value="AAB59549.1"/>
    <property type="status" value="ALT_INIT"/>
    <property type="molecule type" value="mRNA"/>
</dbReference>
<dbReference type="EMBL" id="AH003771">
    <property type="protein sequence ID" value="AAB20222.2"/>
    <property type="molecule type" value="Genomic_DNA"/>
</dbReference>
<dbReference type="EMBL" id="AH003707">
    <property type="protein sequence ID" value="AAB19268.2"/>
    <property type="molecule type" value="Genomic_DNA"/>
</dbReference>
<dbReference type="EMBL" id="M22221">
    <property type="protein sequence ID" value="AAA35590.1"/>
    <property type="molecule type" value="mRNA"/>
</dbReference>
<dbReference type="CCDS" id="CCDS12581.1">
    <molecule id="P12694-1"/>
</dbReference>
<dbReference type="PIR" id="S27156">
    <property type="entry name" value="DEHUXA"/>
</dbReference>
<dbReference type="RefSeq" id="NP_000700.1">
    <molecule id="P12694-1"/>
    <property type="nucleotide sequence ID" value="NM_000709.4"/>
</dbReference>
<dbReference type="RefSeq" id="NP_001158255.1">
    <property type="nucleotide sequence ID" value="NM_001164783.1"/>
</dbReference>
<dbReference type="PDB" id="1DTW">
    <property type="method" value="X-ray"/>
    <property type="resolution" value="2.70 A"/>
    <property type="chains" value="A=46-445"/>
</dbReference>
<dbReference type="PDB" id="1OLS">
    <property type="method" value="X-ray"/>
    <property type="resolution" value="1.85 A"/>
    <property type="chains" value="A=46-445"/>
</dbReference>
<dbReference type="PDB" id="1OLU">
    <property type="method" value="X-ray"/>
    <property type="resolution" value="1.90 A"/>
    <property type="chains" value="A=46-445"/>
</dbReference>
<dbReference type="PDB" id="1OLX">
    <property type="method" value="X-ray"/>
    <property type="resolution" value="2.25 A"/>
    <property type="chains" value="A=46-445"/>
</dbReference>
<dbReference type="PDB" id="1U5B">
    <property type="method" value="X-ray"/>
    <property type="resolution" value="1.83 A"/>
    <property type="chains" value="A=46-445"/>
</dbReference>
<dbReference type="PDB" id="1V11">
    <property type="method" value="X-ray"/>
    <property type="resolution" value="1.95 A"/>
    <property type="chains" value="A=46-445"/>
</dbReference>
<dbReference type="PDB" id="1V16">
    <property type="method" value="X-ray"/>
    <property type="resolution" value="1.90 A"/>
    <property type="chains" value="A=46-445"/>
</dbReference>
<dbReference type="PDB" id="1V1M">
    <property type="method" value="X-ray"/>
    <property type="resolution" value="2.00 A"/>
    <property type="chains" value="A=46-445"/>
</dbReference>
<dbReference type="PDB" id="1V1R">
    <property type="method" value="X-ray"/>
    <property type="resolution" value="1.80 A"/>
    <property type="chains" value="A=46-445"/>
</dbReference>
<dbReference type="PDB" id="1WCI">
    <property type="method" value="X-ray"/>
    <property type="resolution" value="1.84 A"/>
    <property type="chains" value="A=46-445"/>
</dbReference>
<dbReference type="PDB" id="1X7W">
    <property type="method" value="X-ray"/>
    <property type="resolution" value="1.73 A"/>
    <property type="chains" value="A=46-445"/>
</dbReference>
<dbReference type="PDB" id="1X7X">
    <property type="method" value="X-ray"/>
    <property type="resolution" value="2.10 A"/>
    <property type="chains" value="A=46-445"/>
</dbReference>
<dbReference type="PDB" id="1X7Y">
    <property type="method" value="X-ray"/>
    <property type="resolution" value="1.57 A"/>
    <property type="chains" value="A=46-445"/>
</dbReference>
<dbReference type="PDB" id="1X7Z">
    <property type="method" value="X-ray"/>
    <property type="resolution" value="1.72 A"/>
    <property type="chains" value="A=46-445"/>
</dbReference>
<dbReference type="PDB" id="1X80">
    <property type="method" value="X-ray"/>
    <property type="resolution" value="2.00 A"/>
    <property type="chains" value="A=46-445"/>
</dbReference>
<dbReference type="PDB" id="2BEU">
    <property type="method" value="X-ray"/>
    <property type="resolution" value="1.89 A"/>
    <property type="chains" value="A=46-445"/>
</dbReference>
<dbReference type="PDB" id="2BEV">
    <property type="method" value="X-ray"/>
    <property type="resolution" value="1.80 A"/>
    <property type="chains" value="A=46-445"/>
</dbReference>
<dbReference type="PDB" id="2BEW">
    <property type="method" value="X-ray"/>
    <property type="resolution" value="1.79 A"/>
    <property type="chains" value="A=46-445"/>
</dbReference>
<dbReference type="PDB" id="2BFB">
    <property type="method" value="X-ray"/>
    <property type="resolution" value="1.77 A"/>
    <property type="chains" value="A=46-445"/>
</dbReference>
<dbReference type="PDB" id="2BFC">
    <property type="method" value="X-ray"/>
    <property type="resolution" value="1.64 A"/>
    <property type="chains" value="A=46-445"/>
</dbReference>
<dbReference type="PDB" id="2BFD">
    <property type="method" value="X-ray"/>
    <property type="resolution" value="1.39 A"/>
    <property type="chains" value="A=46-445"/>
</dbReference>
<dbReference type="PDB" id="2BFE">
    <property type="method" value="X-ray"/>
    <property type="resolution" value="1.69 A"/>
    <property type="chains" value="A=46-445"/>
</dbReference>
<dbReference type="PDB" id="2BFF">
    <property type="method" value="X-ray"/>
    <property type="resolution" value="1.46 A"/>
    <property type="chains" value="A=46-445"/>
</dbReference>
<dbReference type="PDB" id="2J9F">
    <property type="method" value="X-ray"/>
    <property type="resolution" value="1.88 A"/>
    <property type="chains" value="A/C=46-445"/>
</dbReference>
<dbReference type="PDBsum" id="1DTW"/>
<dbReference type="PDBsum" id="1OLS"/>
<dbReference type="PDBsum" id="1OLU"/>
<dbReference type="PDBsum" id="1OLX"/>
<dbReference type="PDBsum" id="1U5B"/>
<dbReference type="PDBsum" id="1V11"/>
<dbReference type="PDBsum" id="1V16"/>
<dbReference type="PDBsum" id="1V1M"/>
<dbReference type="PDBsum" id="1V1R"/>
<dbReference type="PDBsum" id="1WCI"/>
<dbReference type="PDBsum" id="1X7W"/>
<dbReference type="PDBsum" id="1X7X"/>
<dbReference type="PDBsum" id="1X7Y"/>
<dbReference type="PDBsum" id="1X7Z"/>
<dbReference type="PDBsum" id="1X80"/>
<dbReference type="PDBsum" id="2BEU"/>
<dbReference type="PDBsum" id="2BEV"/>
<dbReference type="PDBsum" id="2BEW"/>
<dbReference type="PDBsum" id="2BFB"/>
<dbReference type="PDBsum" id="2BFC"/>
<dbReference type="PDBsum" id="2BFD"/>
<dbReference type="PDBsum" id="2BFE"/>
<dbReference type="PDBsum" id="2BFF"/>
<dbReference type="PDBsum" id="2J9F"/>
<dbReference type="SMR" id="P12694"/>
<dbReference type="BioGRID" id="107065">
    <property type="interactions" value="211"/>
</dbReference>
<dbReference type="ComplexPortal" id="CPX-2216">
    <property type="entry name" value="Mitochondrial 2-oxoisovalerate dehydrogenase complex"/>
</dbReference>
<dbReference type="DIP" id="DIP-6146N"/>
<dbReference type="FunCoup" id="P12694">
    <property type="interactions" value="1112"/>
</dbReference>
<dbReference type="IntAct" id="P12694">
    <property type="interactions" value="92"/>
</dbReference>
<dbReference type="MINT" id="P12694"/>
<dbReference type="STRING" id="9606.ENSP00000269980"/>
<dbReference type="iPTMnet" id="P12694"/>
<dbReference type="PhosphoSitePlus" id="P12694"/>
<dbReference type="SwissPalm" id="P12694"/>
<dbReference type="BioMuta" id="BCKDHA"/>
<dbReference type="jPOST" id="P12694"/>
<dbReference type="MassIVE" id="P12694"/>
<dbReference type="PaxDb" id="9606-ENSP00000269980"/>
<dbReference type="PeptideAtlas" id="P12694"/>
<dbReference type="ProteomicsDB" id="4756"/>
<dbReference type="ProteomicsDB" id="52863">
    <molecule id="P12694-1"/>
</dbReference>
<dbReference type="Pumba" id="P12694"/>
<dbReference type="Antibodypedia" id="35354">
    <property type="antibodies" value="148 antibodies from 25 providers"/>
</dbReference>
<dbReference type="DNASU" id="593"/>
<dbReference type="Ensembl" id="ENST00000269980.7">
    <molecule id="P12694-1"/>
    <property type="protein sequence ID" value="ENSP00000269980.2"/>
    <property type="gene ID" value="ENSG00000248098.12"/>
</dbReference>
<dbReference type="Ensembl" id="ENST00000457836.6">
    <molecule id="P12694-2"/>
    <property type="protein sequence ID" value="ENSP00000416000.2"/>
    <property type="gene ID" value="ENSG00000248098.12"/>
</dbReference>
<dbReference type="GeneID" id="593"/>
<dbReference type="KEGG" id="hsa:593"/>
<dbReference type="MANE-Select" id="ENST00000269980.7">
    <property type="protein sequence ID" value="ENSP00000269980.2"/>
    <property type="RefSeq nucleotide sequence ID" value="NM_000709.4"/>
    <property type="RefSeq protein sequence ID" value="NP_000700.1"/>
</dbReference>
<dbReference type="UCSC" id="uc002oqq.4">
    <molecule id="P12694-1"/>
    <property type="organism name" value="human"/>
</dbReference>
<dbReference type="AGR" id="HGNC:986"/>
<dbReference type="CTD" id="593"/>
<dbReference type="DisGeNET" id="593"/>
<dbReference type="GeneCards" id="BCKDHA"/>
<dbReference type="GeneReviews" id="BCKDHA"/>
<dbReference type="HGNC" id="HGNC:986">
    <property type="gene designation" value="BCKDHA"/>
</dbReference>
<dbReference type="HPA" id="ENSG00000248098">
    <property type="expression patterns" value="Low tissue specificity"/>
</dbReference>
<dbReference type="MalaCards" id="BCKDHA"/>
<dbReference type="MIM" id="248600">
    <property type="type" value="phenotype"/>
</dbReference>
<dbReference type="MIM" id="608348">
    <property type="type" value="gene"/>
</dbReference>
<dbReference type="neXtProt" id="NX_P12694"/>
<dbReference type="OpenTargets" id="ENSG00000248098"/>
<dbReference type="Orphanet" id="268145">
    <property type="disease" value="Classic maple syrup urine disease"/>
</dbReference>
<dbReference type="Orphanet" id="268162">
    <property type="disease" value="Intermediate maple syrup urine disease"/>
</dbReference>
<dbReference type="Orphanet" id="268173">
    <property type="disease" value="Intermittent maple syrup urine disease"/>
</dbReference>
<dbReference type="PharmGKB" id="PA25297"/>
<dbReference type="VEuPathDB" id="HostDB:ENSG00000248098"/>
<dbReference type="eggNOG" id="KOG1182">
    <property type="taxonomic scope" value="Eukaryota"/>
</dbReference>
<dbReference type="GeneTree" id="ENSGT00530000063174"/>
<dbReference type="HOGENOM" id="CLU_029393_1_0_1"/>
<dbReference type="InParanoid" id="P12694"/>
<dbReference type="OMA" id="VLPYYRD"/>
<dbReference type="OrthoDB" id="3845at2759"/>
<dbReference type="PAN-GO" id="P12694">
    <property type="GO annotations" value="2 GO annotations based on evolutionary models"/>
</dbReference>
<dbReference type="PhylomeDB" id="P12694"/>
<dbReference type="TreeFam" id="TF300863"/>
<dbReference type="BioCyc" id="MetaCyc:MONOMER-12005"/>
<dbReference type="PathwayCommons" id="P12694"/>
<dbReference type="Reactome" id="R-HSA-70895">
    <property type="pathway name" value="Branched-chain amino acid catabolism"/>
</dbReference>
<dbReference type="Reactome" id="R-HSA-9859138">
    <property type="pathway name" value="BCKDH synthesizes BCAA-CoA from KIC, KMVA, KIV"/>
</dbReference>
<dbReference type="Reactome" id="R-HSA-9865113">
    <property type="pathway name" value="Loss-of-function mutations in DBT cause MSUD2"/>
</dbReference>
<dbReference type="Reactome" id="R-HSA-9865125">
    <property type="pathway name" value="Loss-of-function mutations in BCKDHA or BCKDHB cause MSUD"/>
</dbReference>
<dbReference type="Reactome" id="R-HSA-9907570">
    <property type="pathway name" value="Loss-of-function mutations in DLD cause MSUD3/DLDD"/>
</dbReference>
<dbReference type="Reactome" id="R-HSA-9912481">
    <property type="pathway name" value="Branched-chain ketoacid dehydrogenase kinase deficiency"/>
</dbReference>
<dbReference type="Reactome" id="R-HSA-9912529">
    <property type="pathway name" value="H139Hfs13* PPM1K causes a mild variant of MSUD"/>
</dbReference>
<dbReference type="SABIO-RK" id="P12694"/>
<dbReference type="SignaLink" id="P12694"/>
<dbReference type="SIGNOR" id="P12694"/>
<dbReference type="BioGRID-ORCS" id="593">
    <property type="hits" value="18 hits in 1160 CRISPR screens"/>
</dbReference>
<dbReference type="ChiTaRS" id="BCKDHA">
    <property type="organism name" value="human"/>
</dbReference>
<dbReference type="EvolutionaryTrace" id="P12694"/>
<dbReference type="GeneWiki" id="BCKDHA"/>
<dbReference type="GenomeRNAi" id="593"/>
<dbReference type="Pharos" id="P12694">
    <property type="development level" value="Tbio"/>
</dbReference>
<dbReference type="PRO" id="PR:P12694"/>
<dbReference type="Proteomes" id="UP000005640">
    <property type="component" value="Chromosome 19"/>
</dbReference>
<dbReference type="RNAct" id="P12694">
    <property type="molecule type" value="protein"/>
</dbReference>
<dbReference type="Bgee" id="ENSG00000248098">
    <property type="expression patterns" value="Expressed in lower esophagus mucosa and 99 other cell types or tissues"/>
</dbReference>
<dbReference type="ExpressionAtlas" id="P12694">
    <property type="expression patterns" value="baseline and differential"/>
</dbReference>
<dbReference type="GO" id="GO:0160157">
    <property type="term" value="C:branched-chain alpha-ketoacid dehydrogenase complex"/>
    <property type="evidence" value="ECO:0000314"/>
    <property type="project" value="UniProtKB"/>
</dbReference>
<dbReference type="GO" id="GO:0005759">
    <property type="term" value="C:mitochondrial matrix"/>
    <property type="evidence" value="ECO:0000304"/>
    <property type="project" value="Reactome"/>
</dbReference>
<dbReference type="GO" id="GO:0005739">
    <property type="term" value="C:mitochondrion"/>
    <property type="evidence" value="ECO:0007005"/>
    <property type="project" value="UniProtKB"/>
</dbReference>
<dbReference type="GO" id="GO:0003863">
    <property type="term" value="F:3-methyl-2-oxobutanoate dehydrogenase (2-methylpropanoyl-transferring) activity"/>
    <property type="evidence" value="ECO:0000314"/>
    <property type="project" value="HGNC-UCL"/>
</dbReference>
<dbReference type="GO" id="GO:0016831">
    <property type="term" value="F:carboxy-lyase activity"/>
    <property type="evidence" value="ECO:0000304"/>
    <property type="project" value="HGNC-UCL"/>
</dbReference>
<dbReference type="GO" id="GO:0046872">
    <property type="term" value="F:metal ion binding"/>
    <property type="evidence" value="ECO:0007669"/>
    <property type="project" value="UniProtKB-KW"/>
</dbReference>
<dbReference type="GO" id="GO:0009083">
    <property type="term" value="P:branched-chain amino acid catabolic process"/>
    <property type="evidence" value="ECO:0000314"/>
    <property type="project" value="HGNC-UCL"/>
</dbReference>
<dbReference type="CDD" id="cd02000">
    <property type="entry name" value="TPP_E1_PDC_ADC_BCADC"/>
    <property type="match status" value="1"/>
</dbReference>
<dbReference type="FunFam" id="3.40.50.970:FF:000015">
    <property type="entry name" value="2-oxoisovalerate dehydrogenase subunit alpha"/>
    <property type="match status" value="1"/>
</dbReference>
<dbReference type="Gene3D" id="3.40.50.970">
    <property type="match status" value="1"/>
</dbReference>
<dbReference type="InterPro" id="IPR050771">
    <property type="entry name" value="Alpha-ketoacid_DH_E1_comp"/>
</dbReference>
<dbReference type="InterPro" id="IPR001017">
    <property type="entry name" value="DH_E1"/>
</dbReference>
<dbReference type="InterPro" id="IPR029061">
    <property type="entry name" value="THDP-binding"/>
</dbReference>
<dbReference type="PANTHER" id="PTHR43380">
    <property type="entry name" value="2-OXOISOVALERATE DEHYDROGENASE SUBUNIT ALPHA, MITOCHONDRIAL"/>
    <property type="match status" value="1"/>
</dbReference>
<dbReference type="PANTHER" id="PTHR43380:SF1">
    <property type="entry name" value="2-OXOISOVALERATE DEHYDROGENASE SUBUNIT ALPHA, MITOCHONDRIAL"/>
    <property type="match status" value="1"/>
</dbReference>
<dbReference type="Pfam" id="PF00676">
    <property type="entry name" value="E1_dh"/>
    <property type="match status" value="1"/>
</dbReference>
<dbReference type="SUPFAM" id="SSF52518">
    <property type="entry name" value="Thiamin diphosphate-binding fold (THDP-binding)"/>
    <property type="match status" value="1"/>
</dbReference>
<comment type="function">
    <text evidence="3 12 16">Together with BCKDHB forms the heterotetrameric E1 subunit of the mitochondrial branched-chain alpha-ketoacid dehydrogenase (BCKD) complex. The BCKD complex catalyzes the multi-step oxidative decarboxylation of alpha-ketoacids derived from the branched-chain amino-acids valine, leucine and isoleucine producing CO2 and acyl-CoA which is subsequently utilized to produce energy. The E1 subunit catalyzes the first step with the decarboxylation of the alpha-ketoacid forming an enzyme-product intermediate. A reductive acylation mediated by the lipoylamide cofactor of E2 extracts the acyl group from the E1 active site for the next step of the reaction.</text>
</comment>
<comment type="catalytic activity">
    <reaction evidence="3 12 16">
        <text>N(6)-[(R)-lipoyl]-L-lysyl-[protein] + 3-methyl-2-oxobutanoate + H(+) = N(6)-[(R)-S(8)-2-methylpropanoyldihydrolipoyl]-L-lysyl-[protein] + CO2</text>
        <dbReference type="Rhea" id="RHEA:13457"/>
        <dbReference type="Rhea" id="RHEA-COMP:10474"/>
        <dbReference type="Rhea" id="RHEA-COMP:10497"/>
        <dbReference type="ChEBI" id="CHEBI:11851"/>
        <dbReference type="ChEBI" id="CHEBI:15378"/>
        <dbReference type="ChEBI" id="CHEBI:16526"/>
        <dbReference type="ChEBI" id="CHEBI:83099"/>
        <dbReference type="ChEBI" id="CHEBI:83142"/>
        <dbReference type="EC" id="1.2.4.4"/>
    </reaction>
    <physiologicalReaction direction="left-to-right" evidence="21">
        <dbReference type="Rhea" id="RHEA:13458"/>
    </physiologicalReaction>
</comment>
<comment type="cofactor">
    <cofactor evidence="3">
        <name>thiamine diphosphate</name>
        <dbReference type="ChEBI" id="CHEBI:58937"/>
    </cofactor>
    <cofactor evidence="3">
        <name>Mg(2+)</name>
        <dbReference type="ChEBI" id="CHEBI:18420"/>
    </cofactor>
</comment>
<comment type="subunit">
    <text evidence="3 10 16 17">Heterotetramer of 2 alpha/BCKDHA and 2 beta chains/BCKDHB that forms the branched-chain alpha-keto acid decarboxylase (E1) component of the BCKD complex (PubMed:10745006, PubMed:9582350). The branched-chain alpha-ketoacid dehydrogenase is a large complex composed of three major building blocks E1, E2 and E3. It is organized around E2, a 24-meric cubic core composed of DBT, to which are associated 6 to 12 copies of E1, and approximately 6 copies of the dehydrogenase E3, a DLD dimer (PubMed:10745006). Interacts with PPM1K.</text>
</comment>
<comment type="interaction">
    <interactant intactId="EBI-1029053">
        <id>P12694</id>
    </interactant>
    <interactant intactId="EBI-1029067">
        <id>P21953</id>
        <label>BCKDHB</label>
    </interactant>
    <organismsDiffer>false</organismsDiffer>
    <experiments>15</experiments>
</comment>
<comment type="interaction">
    <interactant intactId="EBI-15489562">
        <id>P12694-1</id>
    </interactant>
    <interactant intactId="EBI-15489569">
        <id>P21953-1</id>
        <label>BCKDHB</label>
    </interactant>
    <organismsDiffer>false</organismsDiffer>
    <experiments>3</experiments>
</comment>
<comment type="subcellular location">
    <subcellularLocation>
        <location evidence="20">Mitochondrion matrix</location>
    </subcellularLocation>
</comment>
<comment type="alternative products">
    <event type="alternative splicing"/>
    <isoform>
        <id>P12694-1</id>
        <name>1</name>
        <sequence type="displayed"/>
    </isoform>
    <isoform>
        <id>P12694-2</id>
        <name>2</name>
        <sequence type="described" ref="VSP_056156 VSP_056157"/>
    </isoform>
</comment>
<comment type="PTM">
    <text evidence="6 10">Phosphorylated at Ser-337 by BCKDK and dephosphorylated by protein phosphatase PPM1K.</text>
</comment>
<comment type="disease" evidence="3 4 5 7 8 9 11 12 14 15 16">
    <disease id="DI-01936">
        <name>Maple syrup urine disease 1A</name>
        <acronym>MSUD1A</acronym>
        <description>A form of maple syrup urine disease, an autosomal recessive metabolic disorder due to an enzyme defect in the catabolic pathway of the branched-chain amino acids leucine, isoleucine, and valine. Accumulation of these 3 amino acids and their corresponding keto acids leads to encephalopathy and progressive neurodegeneration. Clinical features include mental and physical retardation, feeding problems, and a maple syrup odor to the urine. The keto acids of the branched-chain amino acids are present in the urine. If untreated, maple syrup urine disease can lead to seizures, coma, and death. The disease is often classified by its pattern of signs and symptoms. The most common and severe form of the disease is the classic type, which becomes apparent soon after birth. Variant forms of the disorder become apparent later in infancy or childhood and are typically milder, but they still involve developmental delay and other medical problems if not treated.</description>
        <dbReference type="MIM" id="248600"/>
    </disease>
    <text>The disease is caused by variants affecting the gene represented in this entry.</text>
</comment>
<comment type="similarity">
    <text evidence="19">Belongs to the BCKDHA family.</text>
</comment>
<comment type="sequence caution" evidence="19">
    <conflict type="erroneous initiation">
        <sequence resource="EMBL-CDS" id="AAB59549"/>
    </conflict>
    <text>Truncated N-terminus.</text>
</comment>
<feature type="transit peptide" description="Mitochondrion" evidence="13">
    <location>
        <begin position="1"/>
        <end position="45"/>
    </location>
</feature>
<feature type="chain" id="PRO_0000020465" description="2-oxoisovalerate dehydrogenase subunit alpha, mitochondrial">
    <location>
        <begin position="46"/>
        <end position="445"/>
    </location>
</feature>
<feature type="region of interest" description="Disordered" evidence="2">
    <location>
        <begin position="33"/>
        <end position="52"/>
    </location>
</feature>
<feature type="binding site" evidence="3 23">
    <location>
        <position position="158"/>
    </location>
    <ligand>
        <name>thiamine diphosphate</name>
        <dbReference type="ChEBI" id="CHEBI:58937"/>
        <note>ligand shared with beta subunit</note>
    </ligand>
</feature>
<feature type="binding site" evidence="3 23">
    <location>
        <position position="159"/>
    </location>
    <ligand>
        <name>thiamine diphosphate</name>
        <dbReference type="ChEBI" id="CHEBI:58937"/>
        <note>ligand shared with beta subunit</note>
    </ligand>
</feature>
<feature type="binding site" evidence="3 23">
    <location>
        <position position="206"/>
    </location>
    <ligand>
        <name>K(+)</name>
        <dbReference type="ChEBI" id="CHEBI:29103"/>
        <note>structural</note>
    </ligand>
</feature>
<feature type="binding site" evidence="3 23">
    <location>
        <position position="207"/>
    </location>
    <ligand>
        <name>thiamine diphosphate</name>
        <dbReference type="ChEBI" id="CHEBI:58937"/>
        <note>ligand shared with beta subunit</note>
    </ligand>
</feature>
<feature type="binding site" evidence="3 23">
    <location>
        <position position="208"/>
    </location>
    <ligand>
        <name>K(+)</name>
        <dbReference type="ChEBI" id="CHEBI:29103"/>
        <note>structural</note>
    </ligand>
</feature>
<feature type="binding site" evidence="3 23">
    <location>
        <position position="211"/>
    </location>
    <ligand>
        <name>K(+)</name>
        <dbReference type="ChEBI" id="CHEBI:29103"/>
        <note>structural</note>
    </ligand>
</feature>
<feature type="binding site" evidence="3 23">
    <location>
        <position position="212"/>
    </location>
    <ligand>
        <name>K(+)</name>
        <dbReference type="ChEBI" id="CHEBI:29103"/>
        <note>structural</note>
    </ligand>
</feature>
<feature type="binding site" evidence="3 23">
    <location>
        <position position="238"/>
    </location>
    <ligand>
        <name>Mg(2+)</name>
        <dbReference type="ChEBI" id="CHEBI:18420"/>
    </ligand>
</feature>
<feature type="binding site" evidence="3 23">
    <location>
        <position position="239"/>
    </location>
    <ligand>
        <name>thiamine diphosphate</name>
        <dbReference type="ChEBI" id="CHEBI:58937"/>
        <note>ligand shared with beta subunit</note>
    </ligand>
</feature>
<feature type="binding site" evidence="3 23">
    <location>
        <position position="240"/>
    </location>
    <ligand>
        <name>thiamine diphosphate</name>
        <dbReference type="ChEBI" id="CHEBI:58937"/>
        <note>ligand shared with beta subunit</note>
    </ligand>
</feature>
<feature type="binding site" evidence="3 23">
    <location>
        <position position="265"/>
    </location>
    <ligand>
        <name>thiamine diphosphate</name>
        <dbReference type="ChEBI" id="CHEBI:58937"/>
        <note>ligand shared with beta subunit</note>
    </ligand>
</feature>
<feature type="binding site" evidence="3 23">
    <location>
        <position position="267"/>
    </location>
    <ligand>
        <name>Mg(2+)</name>
        <dbReference type="ChEBI" id="CHEBI:18420"/>
    </ligand>
</feature>
<feature type="binding site" evidence="3 23">
    <location>
        <position position="269"/>
    </location>
    <ligand>
        <name>Mg(2+)</name>
        <dbReference type="ChEBI" id="CHEBI:18420"/>
    </ligand>
</feature>
<feature type="binding site" evidence="3 23">
    <location>
        <position position="336"/>
    </location>
    <ligand>
        <name>thiamine diphosphate</name>
        <dbReference type="ChEBI" id="CHEBI:58937"/>
        <note>ligand shared with beta subunit</note>
    </ligand>
</feature>
<feature type="modified residue" description="Phosphoserine; by BCKDK" evidence="6 10">
    <location>
        <position position="337"/>
    </location>
</feature>
<feature type="modified residue" description="Phosphothreonine" evidence="1">
    <location>
        <position position="338"/>
    </location>
</feature>
<feature type="modified residue" description="Phosphoserine" evidence="1">
    <location>
        <position position="339"/>
    </location>
</feature>
<feature type="modified residue" description="Phosphoserine" evidence="1">
    <location>
        <position position="347"/>
    </location>
</feature>
<feature type="modified residue" description="N6-acetyllysine; alternate" evidence="1">
    <location>
        <position position="356"/>
    </location>
</feature>
<feature type="modified residue" description="N6-succinyllysine; alternate" evidence="1">
    <location>
        <position position="356"/>
    </location>
</feature>
<feature type="modified residue" description="N6-succinyllysine" evidence="1">
    <location>
        <position position="380"/>
    </location>
</feature>
<feature type="splice variant" id="VSP_056156" description="In isoform 2." evidence="18">
    <location>
        <begin position="19"/>
        <end position="40"/>
    </location>
</feature>
<feature type="splice variant" id="VSP_056157" description="In isoform 2." evidence="18">
    <original>Y</original>
    <variation>YSSSPILPPDPHSREPTLTWGPLPLC</variation>
    <location>
        <position position="331"/>
    </location>
</feature>
<feature type="sequence variant" id="VAR_034360" description="In dbSNP:rs11549936.">
    <original>P</original>
    <variation>H</variation>
    <location>
        <position position="39"/>
    </location>
</feature>
<feature type="sequence variant" id="VAR_034361" description="In dbSNP:rs34442879.">
    <original>T</original>
    <variation>M</variation>
    <location>
        <position position="151"/>
    </location>
</feature>
<feature type="sequence variant" id="VAR_004968" description="In MSUD1A; loss of 3-methyl-2-oxobutanoate dehydrogenase activity; dbSNP:rs769688327." evidence="3 15">
    <original>R</original>
    <variation>W</variation>
    <location>
        <position position="159"/>
    </location>
</feature>
<feature type="sequence variant" id="VAR_004969" description="In MSUD1A; decreased 3-methyl-2-oxobutanoate dehydrogenase activity." evidence="3 15">
    <original>Q</original>
    <variation>K</variation>
    <location>
        <position position="190"/>
    </location>
</feature>
<feature type="sequence variant" id="VAR_069748" description="In MSUD1A; loss of 3-methyl-2-oxobutanoate dehydrogenase activity; dbSNP:rs398123503." evidence="3 8">
    <original>T</original>
    <variation>M</variation>
    <location>
        <position position="211"/>
    </location>
</feature>
<feature type="sequence variant" id="VAR_069749" description="In MSUD1A; dbSNP:rs375785084." evidence="8">
    <original>A</original>
    <variation>V</variation>
    <location>
        <position position="220"/>
    </location>
</feature>
<feature type="sequence variant" id="VAR_088268" description="In MSUD1A; no effect on solubility; no effect on mitochondrial alpha-ketoglutarate dehydrogenase complex assembly; loss of 3-methyl-2-oxobutanoate dehydrogenase activity; dbSNP:rs137852874." evidence="3 16">
    <original>G</original>
    <variation>S</variation>
    <location>
        <position position="249"/>
    </location>
</feature>
<feature type="sequence variant" id="VAR_004970" description="In MSUD1A; loss of 3-methyl-2-oxobutanoate dehydrogenase activity; dbSNP:rs199599175." evidence="3 15">
    <original>A</original>
    <variation>T</variation>
    <location>
        <position position="253"/>
    </location>
</feature>
<feature type="sequence variant" id="VAR_088269" description="In MSUD1A; uncertain significance; loss of 3-methyl-2-oxobutanoate dehydrogenase activity; dbSNP:rs373713279." evidence="3">
    <original>A</original>
    <variation>D</variation>
    <location>
        <position position="254"/>
    </location>
</feature>
<feature type="sequence variant" id="VAR_088270" description="In MSUD1A; uncertain significance; no effect on solubility; no effect on mitochondrial alpha-ketoglutarate dehydrogenase complex assembly; loss of 3-methyl-2-oxobutanoate dehydrogenase activity; dbSNP:rs137852873." evidence="3 16">
    <original>R</original>
    <variation>W</variation>
    <location>
        <position position="265"/>
    </location>
</feature>
<feature type="sequence variant" id="VAR_088271" description="In MSUD1A; uncertain significance; no effect on solubility; no effect on mitochondrial alpha-ketoglutarate dehydrogenase complex assembly; decreased affinity for the cofactor thiamine diphosphate; decreased 3-methyl-2-oxobutanoate dehydrogenase activity; dbSNP:rs1568508047." evidence="3 16">
    <original>N</original>
    <variation>S</variation>
    <location>
        <position position="267"/>
    </location>
</feature>
<feature type="sequence variant" id="VAR_088272" description="In MSUD1A; no effect on solubility; no effect on mitochondrial alpha-ketoglutarate dehydrogenase complex assembly; loss of 3-methyl-2-oxobutanoate dehydrogenase activity; dbSNP:rs398123508." evidence="3 16">
    <original>A</original>
    <variation>P</variation>
    <location>
        <position position="285"/>
    </location>
</feature>
<feature type="sequence variant" id="VAR_015101" description="In MSUD1A; no effect on solubility; no effect on mitochondrial alpha-ketoglutarate dehydrogenase complex assembly; decreased 3-methyl-2-oxobutanoate dehydrogenase activity; dbSNP:rs137852871." evidence="3 12 16">
    <original>G</original>
    <variation>R</variation>
    <location>
        <position position="290"/>
    </location>
</feature>
<feature type="sequence variant" id="VAR_088273" description="In MSUD1A; uncertain significance; decreased affinity for the cofactor thiamine diphosphate; decreased 3-methyl-2-oxobutanoate dehydrogenase activity; dbSNP:rs200137189." evidence="3">
    <original>R</original>
    <variation>H</variation>
    <location>
        <position position="297"/>
    </location>
</feature>
<feature type="sequence variant" id="VAR_088274" description="In MSUD1A; decreased solubility; changed mitochondrial alpha-ketoglutarate dehydrogenase complex assembly; loss of 3-methyl-2-oxobutanoate dehydrogenase activity; dbSNP:rs137852875." evidence="3 16">
    <original>T</original>
    <variation>R</variation>
    <location>
        <position position="310"/>
    </location>
</feature>
<feature type="sequence variant" id="VAR_004971" description="In MSUD1A; decreased 3-methyl-2-oxobutanoate dehydrogenase activity." evidence="3 15">
    <original>I</original>
    <variation>T</variation>
    <location>
        <position position="326"/>
    </location>
</feature>
<feature type="sequence variant" id="VAR_069750" description="In MSUD1A; dbSNP:rs182923857." evidence="8">
    <original>R</original>
    <variation>C</variation>
    <location>
        <position position="346"/>
    </location>
</feature>
<feature type="sequence variant" id="VAR_069751" description="In MSUD1A.">
    <original>P</original>
    <variation>PKP</variation>
    <location>
        <position position="403"/>
    </location>
</feature>
<feature type="sequence variant" id="VAR_015102" description="In MSUD1A; decreased solubility; loss of mitochondrial alpha-ketoglutarate dehydrogenase complex assembly; loss of 3-methyl-2-oxobutanoate dehydrogenase activity; dbSNP:rs137852872." evidence="3 12 16">
    <original>F</original>
    <variation>C</variation>
    <location>
        <position position="409"/>
    </location>
</feature>
<feature type="sequence variant" id="VAR_004972" description="In MSUD1A; uncertain significance; decreased solubility; changed mitochondrial alpha-ketoglutarate dehydrogenase complex assembly; loss of 3-methyl-2-oxobutanoate dehydrogenase activity; dbSNP:rs398123508." evidence="3 14 16">
    <original>Y</original>
    <variation>C</variation>
    <location>
        <position position="413"/>
    </location>
</feature>
<feature type="sequence variant" id="VAR_069752" description="In MSUD1A." evidence="8">
    <original>LA</original>
    <variation>P</variation>
    <location>
        <begin position="427"/>
        <end position="428"/>
    </location>
</feature>
<feature type="sequence variant" id="VAR_004973" description="In MSUD1A; decreased solubility; loss of mitochondrial alpha-ketoglutarate dehydrogenase complex assembly; loss of 3-methyl-2-oxobutanoate dehydrogenase activity; dbSNP:rs137852870." evidence="3 4 5 7 9 11 16">
    <original>Y</original>
    <variation>N</variation>
    <location>
        <position position="438"/>
    </location>
</feature>
<feature type="mutagenesis site" description="Substantially decreases the stability of the BCKD complex." evidence="6">
    <original>S</original>
    <variation>A</variation>
    <location>
        <position position="337"/>
    </location>
</feature>
<feature type="mutagenesis site" description="Does not affect the stability of the BCKD complex." evidence="6">
    <original>S</original>
    <variation>A</variation>
    <location>
        <position position="347"/>
    </location>
</feature>
<feature type="sequence conflict" description="In Ref. 6; AAB20222/AAB19268." evidence="19" ref="6">
    <original>V</original>
    <variation>G</variation>
    <location>
        <position position="3"/>
    </location>
</feature>
<feature type="sequence conflict" description="In Ref. 5; AAB59549." evidence="19" ref="5">
    <original>S</original>
    <variation>A</variation>
    <location>
        <position position="36"/>
    </location>
</feature>
<feature type="sequence conflict" description="In Ref. 8; AAA35590." evidence="19" ref="8">
    <original>A</original>
    <variation>D</variation>
    <location>
        <position position="248"/>
    </location>
</feature>
<feature type="strand" evidence="29">
    <location>
        <begin position="61"/>
        <end position="64"/>
    </location>
</feature>
<feature type="strand" evidence="24">
    <location>
        <begin position="88"/>
        <end position="90"/>
    </location>
</feature>
<feature type="helix" evidence="27">
    <location>
        <begin position="91"/>
        <end position="93"/>
    </location>
</feature>
<feature type="helix" evidence="27">
    <location>
        <begin position="99"/>
        <end position="124"/>
    </location>
</feature>
<feature type="strand" evidence="27">
    <location>
        <begin position="127"/>
        <end position="129"/>
    </location>
</feature>
<feature type="turn" evidence="26">
    <location>
        <begin position="135"/>
        <end position="137"/>
    </location>
</feature>
<feature type="helix" evidence="27">
    <location>
        <begin position="138"/>
        <end position="146"/>
    </location>
</feature>
<feature type="strand" evidence="27">
    <location>
        <begin position="152"/>
        <end position="155"/>
    </location>
</feature>
<feature type="helix" evidence="27">
    <location>
        <begin position="161"/>
        <end position="166"/>
    </location>
</feature>
<feature type="helix" evidence="27">
    <location>
        <begin position="171"/>
        <end position="179"/>
    </location>
</feature>
<feature type="turn" evidence="27">
    <location>
        <begin position="185"/>
        <end position="188"/>
    </location>
</feature>
<feature type="turn" evidence="27">
    <location>
        <begin position="198"/>
        <end position="201"/>
    </location>
</feature>
<feature type="turn" evidence="27">
    <location>
        <begin position="209"/>
        <end position="211"/>
    </location>
</feature>
<feature type="helix" evidence="27">
    <location>
        <begin position="212"/>
        <end position="226"/>
    </location>
</feature>
<feature type="strand" evidence="27">
    <location>
        <begin position="232"/>
        <end position="237"/>
    </location>
</feature>
<feature type="helix" evidence="27">
    <location>
        <begin position="240"/>
        <end position="242"/>
    </location>
</feature>
<feature type="helix" evidence="27">
    <location>
        <begin position="244"/>
        <end position="255"/>
    </location>
</feature>
<feature type="strand" evidence="27">
    <location>
        <begin position="260"/>
        <end position="266"/>
    </location>
</feature>
<feature type="strand" evidence="27">
    <location>
        <begin position="268"/>
        <end position="270"/>
    </location>
</feature>
<feature type="helix" evidence="27">
    <location>
        <begin position="275"/>
        <end position="277"/>
    </location>
</feature>
<feature type="strand" evidence="27">
    <location>
        <begin position="280"/>
        <end position="282"/>
    </location>
</feature>
<feature type="helix" evidence="27">
    <location>
        <begin position="285"/>
        <end position="287"/>
    </location>
</feature>
<feature type="helix" evidence="27">
    <location>
        <begin position="289"/>
        <end position="291"/>
    </location>
</feature>
<feature type="strand" evidence="27">
    <location>
        <begin position="294"/>
        <end position="299"/>
    </location>
</feature>
<feature type="helix" evidence="27">
    <location>
        <begin position="303"/>
        <end position="320"/>
    </location>
</feature>
<feature type="strand" evidence="27">
    <location>
        <begin position="324"/>
        <end position="329"/>
    </location>
</feature>
<feature type="helix" evidence="28">
    <location>
        <begin position="342"/>
        <end position="344"/>
    </location>
</feature>
<feature type="helix" evidence="28">
    <location>
        <begin position="351"/>
        <end position="357"/>
    </location>
</feature>
<feature type="helix" evidence="27">
    <location>
        <begin position="360"/>
        <end position="368"/>
    </location>
</feature>
<feature type="turn" evidence="27">
    <location>
        <begin position="369"/>
        <end position="372"/>
    </location>
</feature>
<feature type="helix" evidence="27">
    <location>
        <begin position="376"/>
        <end position="399"/>
    </location>
</feature>
<feature type="helix" evidence="27">
    <location>
        <begin position="405"/>
        <end position="408"/>
    </location>
</feature>
<feature type="turn" evidence="25">
    <location>
        <begin position="409"/>
        <end position="411"/>
    </location>
</feature>
<feature type="strand" evidence="27">
    <location>
        <begin position="412"/>
        <end position="415"/>
    </location>
</feature>
<feature type="helix" evidence="27">
    <location>
        <begin position="418"/>
        <end position="434"/>
    </location>
</feature>
<feature type="helix" evidence="27">
    <location>
        <begin position="435"/>
        <end position="437"/>
    </location>
</feature>
<feature type="helix" evidence="27">
    <location>
        <begin position="440"/>
        <end position="442"/>
    </location>
</feature>
<protein>
    <recommendedName>
        <fullName evidence="20">2-oxoisovalerate dehydrogenase subunit alpha, mitochondrial</fullName>
        <ecNumber evidence="3 12 16">1.2.4.4</ecNumber>
    </recommendedName>
    <alternativeName>
        <fullName>Branched-chain alpha-keto acid dehydrogenase E1 component alpha chain</fullName>
        <shortName>BCKDE1A</shortName>
        <shortName>BCKDH E1-alpha</shortName>
    </alternativeName>
</protein>
<reference key="1">
    <citation type="journal article" date="1992" name="Biochim. Biophys. Acta">
        <title>Nucleotide sequence of the 5' end including the initiation codon of cDNA for the E1 alpha subunit of the human branched chain alpha-ketoacid dehydrogenase complex.</title>
        <authorList>
            <person name="McKean M.C."/>
            <person name="Winkeler K.A."/>
            <person name="Danner D.J."/>
        </authorList>
    </citation>
    <scope>NUCLEOTIDE SEQUENCE [MRNA] (ISOFORM 1)</scope>
</reference>
<reference key="2">
    <citation type="journal article" date="2004" name="Nat. Genet.">
        <title>Complete sequencing and characterization of 21,243 full-length human cDNAs.</title>
        <authorList>
            <person name="Ota T."/>
            <person name="Suzuki Y."/>
            <person name="Nishikawa T."/>
            <person name="Otsuki T."/>
            <person name="Sugiyama T."/>
            <person name="Irie R."/>
            <person name="Wakamatsu A."/>
            <person name="Hayashi K."/>
            <person name="Sato H."/>
            <person name="Nagai K."/>
            <person name="Kimura K."/>
            <person name="Makita H."/>
            <person name="Sekine M."/>
            <person name="Obayashi M."/>
            <person name="Nishi T."/>
            <person name="Shibahara T."/>
            <person name="Tanaka T."/>
            <person name="Ishii S."/>
            <person name="Yamamoto J."/>
            <person name="Saito K."/>
            <person name="Kawai Y."/>
            <person name="Isono Y."/>
            <person name="Nakamura Y."/>
            <person name="Nagahari K."/>
            <person name="Murakami K."/>
            <person name="Yasuda T."/>
            <person name="Iwayanagi T."/>
            <person name="Wagatsuma M."/>
            <person name="Shiratori A."/>
            <person name="Sudo H."/>
            <person name="Hosoiri T."/>
            <person name="Kaku Y."/>
            <person name="Kodaira H."/>
            <person name="Kondo H."/>
            <person name="Sugawara M."/>
            <person name="Takahashi M."/>
            <person name="Kanda K."/>
            <person name="Yokoi T."/>
            <person name="Furuya T."/>
            <person name="Kikkawa E."/>
            <person name="Omura Y."/>
            <person name="Abe K."/>
            <person name="Kamihara K."/>
            <person name="Katsuta N."/>
            <person name="Sato K."/>
            <person name="Tanikawa M."/>
            <person name="Yamazaki M."/>
            <person name="Ninomiya K."/>
            <person name="Ishibashi T."/>
            <person name="Yamashita H."/>
            <person name="Murakawa K."/>
            <person name="Fujimori K."/>
            <person name="Tanai H."/>
            <person name="Kimata M."/>
            <person name="Watanabe M."/>
            <person name="Hiraoka S."/>
            <person name="Chiba Y."/>
            <person name="Ishida S."/>
            <person name="Ono Y."/>
            <person name="Takiguchi S."/>
            <person name="Watanabe S."/>
            <person name="Yosida M."/>
            <person name="Hotuta T."/>
            <person name="Kusano J."/>
            <person name="Kanehori K."/>
            <person name="Takahashi-Fujii A."/>
            <person name="Hara H."/>
            <person name="Tanase T.-O."/>
            <person name="Nomura Y."/>
            <person name="Togiya S."/>
            <person name="Komai F."/>
            <person name="Hara R."/>
            <person name="Takeuchi K."/>
            <person name="Arita M."/>
            <person name="Imose N."/>
            <person name="Musashino K."/>
            <person name="Yuuki H."/>
            <person name="Oshima A."/>
            <person name="Sasaki N."/>
            <person name="Aotsuka S."/>
            <person name="Yoshikawa Y."/>
            <person name="Matsunawa H."/>
            <person name="Ichihara T."/>
            <person name="Shiohata N."/>
            <person name="Sano S."/>
            <person name="Moriya S."/>
            <person name="Momiyama H."/>
            <person name="Satoh N."/>
            <person name="Takami S."/>
            <person name="Terashima Y."/>
            <person name="Suzuki O."/>
            <person name="Nakagawa S."/>
            <person name="Senoh A."/>
            <person name="Mizoguchi H."/>
            <person name="Goto Y."/>
            <person name="Shimizu F."/>
            <person name="Wakebe H."/>
            <person name="Hishigaki H."/>
            <person name="Watanabe T."/>
            <person name="Sugiyama A."/>
            <person name="Takemoto M."/>
            <person name="Kawakami B."/>
            <person name="Yamazaki M."/>
            <person name="Watanabe K."/>
            <person name="Kumagai A."/>
            <person name="Itakura S."/>
            <person name="Fukuzumi Y."/>
            <person name="Fujimori Y."/>
            <person name="Komiyama M."/>
            <person name="Tashiro H."/>
            <person name="Tanigami A."/>
            <person name="Fujiwara T."/>
            <person name="Ono T."/>
            <person name="Yamada K."/>
            <person name="Fujii Y."/>
            <person name="Ozaki K."/>
            <person name="Hirao M."/>
            <person name="Ohmori Y."/>
            <person name="Kawabata A."/>
            <person name="Hikiji T."/>
            <person name="Kobatake N."/>
            <person name="Inagaki H."/>
            <person name="Ikema Y."/>
            <person name="Okamoto S."/>
            <person name="Okitani R."/>
            <person name="Kawakami T."/>
            <person name="Noguchi S."/>
            <person name="Itoh T."/>
            <person name="Shigeta K."/>
            <person name="Senba T."/>
            <person name="Matsumura K."/>
            <person name="Nakajima Y."/>
            <person name="Mizuno T."/>
            <person name="Morinaga M."/>
            <person name="Sasaki M."/>
            <person name="Togashi T."/>
            <person name="Oyama M."/>
            <person name="Hata H."/>
            <person name="Watanabe M."/>
            <person name="Komatsu T."/>
            <person name="Mizushima-Sugano J."/>
            <person name="Satoh T."/>
            <person name="Shirai Y."/>
            <person name="Takahashi Y."/>
            <person name="Nakagawa K."/>
            <person name="Okumura K."/>
            <person name="Nagase T."/>
            <person name="Nomura N."/>
            <person name="Kikuchi H."/>
            <person name="Masuho Y."/>
            <person name="Yamashita R."/>
            <person name="Nakai K."/>
            <person name="Yada T."/>
            <person name="Nakamura Y."/>
            <person name="Ohara O."/>
            <person name="Isogai T."/>
            <person name="Sugano S."/>
        </authorList>
    </citation>
    <scope>NUCLEOTIDE SEQUENCE [LARGE SCALE MRNA] (ISOFORM 2)</scope>
</reference>
<reference key="3">
    <citation type="journal article" date="2004" name="Nature">
        <title>The DNA sequence and biology of human chromosome 19.</title>
        <authorList>
            <person name="Grimwood J."/>
            <person name="Gordon L.A."/>
            <person name="Olsen A.S."/>
            <person name="Terry A."/>
            <person name="Schmutz J."/>
            <person name="Lamerdin J.E."/>
            <person name="Hellsten U."/>
            <person name="Goodstein D."/>
            <person name="Couronne O."/>
            <person name="Tran-Gyamfi M."/>
            <person name="Aerts A."/>
            <person name="Altherr M."/>
            <person name="Ashworth L."/>
            <person name="Bajorek E."/>
            <person name="Black S."/>
            <person name="Branscomb E."/>
            <person name="Caenepeel S."/>
            <person name="Carrano A.V."/>
            <person name="Caoile C."/>
            <person name="Chan Y.M."/>
            <person name="Christensen M."/>
            <person name="Cleland C.A."/>
            <person name="Copeland A."/>
            <person name="Dalin E."/>
            <person name="Dehal P."/>
            <person name="Denys M."/>
            <person name="Detter J.C."/>
            <person name="Escobar J."/>
            <person name="Flowers D."/>
            <person name="Fotopulos D."/>
            <person name="Garcia C."/>
            <person name="Georgescu A.M."/>
            <person name="Glavina T."/>
            <person name="Gomez M."/>
            <person name="Gonzales E."/>
            <person name="Groza M."/>
            <person name="Hammon N."/>
            <person name="Hawkins T."/>
            <person name="Haydu L."/>
            <person name="Ho I."/>
            <person name="Huang W."/>
            <person name="Israni S."/>
            <person name="Jett J."/>
            <person name="Kadner K."/>
            <person name="Kimball H."/>
            <person name="Kobayashi A."/>
            <person name="Larionov V."/>
            <person name="Leem S.-H."/>
            <person name="Lopez F."/>
            <person name="Lou Y."/>
            <person name="Lowry S."/>
            <person name="Malfatti S."/>
            <person name="Martinez D."/>
            <person name="McCready P.M."/>
            <person name="Medina C."/>
            <person name="Morgan J."/>
            <person name="Nelson K."/>
            <person name="Nolan M."/>
            <person name="Ovcharenko I."/>
            <person name="Pitluck S."/>
            <person name="Pollard M."/>
            <person name="Popkie A.P."/>
            <person name="Predki P."/>
            <person name="Quan G."/>
            <person name="Ramirez L."/>
            <person name="Rash S."/>
            <person name="Retterer J."/>
            <person name="Rodriguez A."/>
            <person name="Rogers S."/>
            <person name="Salamov A."/>
            <person name="Salazar A."/>
            <person name="She X."/>
            <person name="Smith D."/>
            <person name="Slezak T."/>
            <person name="Solovyev V."/>
            <person name="Thayer N."/>
            <person name="Tice H."/>
            <person name="Tsai M."/>
            <person name="Ustaszewska A."/>
            <person name="Vo N."/>
            <person name="Wagner M."/>
            <person name="Wheeler J."/>
            <person name="Wu K."/>
            <person name="Xie G."/>
            <person name="Yang J."/>
            <person name="Dubchak I."/>
            <person name="Furey T.S."/>
            <person name="DeJong P."/>
            <person name="Dickson M."/>
            <person name="Gordon D."/>
            <person name="Eichler E.E."/>
            <person name="Pennacchio L.A."/>
            <person name="Richardson P."/>
            <person name="Stubbs L."/>
            <person name="Rokhsar D.S."/>
            <person name="Myers R.M."/>
            <person name="Rubin E.M."/>
            <person name="Lucas S.M."/>
        </authorList>
    </citation>
    <scope>NUCLEOTIDE SEQUENCE [LARGE SCALE GENOMIC DNA]</scope>
</reference>
<reference key="4">
    <citation type="journal article" date="2004" name="Genome Res.">
        <title>The status, quality, and expansion of the NIH full-length cDNA project: the Mammalian Gene Collection (MGC).</title>
        <authorList>
            <consortium name="The MGC Project Team"/>
        </authorList>
    </citation>
    <scope>NUCLEOTIDE SEQUENCE [LARGE SCALE MRNA] (ISOFORM 1)</scope>
    <source>
        <tissue>Bone marrow</tissue>
        <tissue>Lung</tissue>
    </source>
</reference>
<reference key="5">
    <citation type="journal article" date="1989" name="J. Biol. Chem.">
        <title>Molecular phenotypes in cultured maple syrup urine disease cells. Complete E1 alpha cDNA sequence and mRNA and subunit contents of the human branched chain alpha-keto acid dehydrogenase complex.</title>
        <authorList>
            <person name="Fisher C.W."/>
            <person name="Chuang J.L."/>
            <person name="Griffin T.A."/>
            <person name="Lau K.S."/>
            <person name="Cox R.P."/>
            <person name="Chuang D.T."/>
        </authorList>
    </citation>
    <scope>NUCLEOTIDE SEQUENCE [MRNA] OF 3-445 (ISOFORM 1)</scope>
</reference>
<reference key="6">
    <citation type="journal article" date="1991" name="FEBS Lett.">
        <title>Structure of the gene encoding the entire mature E1 alpha subunit of human branched-chain alpha-keto acid dehydrogenase complex.</title>
        <authorList>
            <person name="Dariush N."/>
            <person name="Fisher C.W."/>
            <person name="Cox R.P."/>
            <person name="Chuang D.T."/>
        </authorList>
    </citation>
    <scope>NUCLEOTIDE SEQUENCE [GENOMIC DNA] OF 3-445</scope>
    <scope>VARIANT MSUD1A ASN-438</scope>
</reference>
<reference key="7">
    <citation type="journal article" date="1991" name="FEBS Lett.">
        <authorList>
            <person name="Dariush N."/>
            <person name="Fisher C.W."/>
            <person name="Cox R.P."/>
            <person name="Chuang D.T."/>
        </authorList>
    </citation>
    <scope>ERRATUM OF PUBMED:2060625</scope>
</reference>
<reference key="8">
    <citation type="journal article" date="1988" name="Gene">
        <title>Nucleotide and deduced amino acid sequence of the E1 alpha subunit of human liver branched-chain alpha-ketoacid dehydrogenase.</title>
        <authorList>
            <person name="Zhang B."/>
            <person name="Crabb D.W."/>
            <person name="Harris R.A."/>
        </authorList>
    </citation>
    <scope>NUCLEOTIDE SEQUENCE [MRNA] OF 68-445 (ISOFORM 1)</scope>
    <source>
        <tissue>Liver</tissue>
    </source>
</reference>
<reference key="9">
    <citation type="journal article" date="1994" name="Biochim. Biophys. Acta">
        <title>Differential processing of human and rat E1 alpha precursors of the branched-chain alpha-keto acid dehydrogenase complex caused by an N-terminal proline in the rat sequence.</title>
        <authorList>
            <person name="Wynn R.M."/>
            <person name="Kochi H."/>
            <person name="Cox R.P."/>
            <person name="Chuang D.T."/>
        </authorList>
    </citation>
    <scope>PROTEIN SEQUENCE OF 46-57</scope>
    <scope>TRANSIT PEPTIDE</scope>
</reference>
<reference key="10">
    <citation type="journal article" date="2009" name="J. Clin. Invest.">
        <title>Protein phosphatase 2Cm is a critical regulator of branched-chain amino acid catabolism in mice and cultured cells.</title>
        <authorList>
            <person name="Lu G."/>
            <person name="Sun H."/>
            <person name="She P."/>
            <person name="Youn J.Y."/>
            <person name="Warburton S."/>
            <person name="Ping P."/>
            <person name="Vondriska T.M."/>
            <person name="Cai H."/>
            <person name="Lynch C.J."/>
            <person name="Wang Y."/>
        </authorList>
    </citation>
    <scope>PHOSPHORYLATION AT SER-337</scope>
    <scope>MUTAGENESIS OF SER-337 AND SER-347</scope>
</reference>
<reference key="11">
    <citation type="journal article" date="2012" name="J. Biol. Chem.">
        <title>Tissue-specific and nutrient regulation of the branched-chain alpha-keto acid dehydrogenase phosphatase, protein phosphatase 2Cm (PP2Cm).</title>
        <authorList>
            <person name="Zhou M."/>
            <person name="Lu G."/>
            <person name="Gao C."/>
            <person name="Wang Y."/>
            <person name="Sun H."/>
        </authorList>
    </citation>
    <scope>PHOSPHORYLATION AT SER-337</scope>
    <scope>INTERACTION WITH PPM1K</scope>
</reference>
<reference evidence="23" key="12">
    <citation type="journal article" date="2000" name="Structure">
        <title>Crystal structure of human branched-chain alpha-ketoacid dehydrogenase and the molecular basis of multienzyme complex deficiency in maple syrup urine disease.</title>
        <authorList>
            <person name="Aevarsson A."/>
            <person name="Chuang J.L."/>
            <person name="Wynn R.M."/>
            <person name="Turley S."/>
            <person name="Chuang D.T."/>
            <person name="Hol W.G.J."/>
        </authorList>
    </citation>
    <scope>X-RAY CRYSTALLOGRAPHY (2.7 ANGSTROMS) OF 46-445 IN COMPLEX WITH BCKDHB; THIAMINE PYROPHOSPHATE; POTASSIUM AND MAGNESIUM</scope>
    <scope>FUNCTION</scope>
    <scope>CATALYTIC ACTIVITY</scope>
    <scope>COFACTOR</scope>
    <scope>SUBUNIT</scope>
    <scope>SUBCELLULAR LOCATION</scope>
    <scope>VARIANTS MSUD1A ASP-254 AND HIS-297</scope>
    <scope>CHARACTERIZATION OF VARIANTS MSUD1A SER-159; LYS-190; MET-211; SER-249; THR-253; ASP-254; TRP-265; SER-267; PRO-285; ARG-290; HIS-297; ARG-310; CYS-409; CYS-413 AND ASN-438</scope>
</reference>
<reference key="13">
    <citation type="journal article" date="1994" name="Am. J. Hum. Genet.">
        <title>Molecular basis of maple syrup urine disease: novel mutations at the E1 alpha locus that impair E1(alpha 2 beta 2) assembly or decrease steady-state E1 alpha mRNA levels of branched-chain alpha-keto acid dehydrogenase complex.</title>
        <authorList>
            <person name="Chuang J.L."/>
            <person name="Fisher C.R."/>
            <person name="Cox R.P."/>
            <person name="Chuang D.T."/>
        </authorList>
    </citation>
    <scope>VARIANT MSUD1A CYS-413</scope>
</reference>
<reference key="14">
    <citation type="journal article" date="1989" name="J. Clin. Invest.">
        <title>Evidence for both a regulatory mutation and a structural mutation in a family with maple syrup urine disease.</title>
        <authorList>
            <person name="Zhang B."/>
            <person name="Edenberg H.J."/>
            <person name="Crabb D.W."/>
            <person name="Harris R.A."/>
        </authorList>
    </citation>
    <scope>VARIANT MSUD1A ASN-438</scope>
</reference>
<reference key="15">
    <citation type="journal article" date="1990" name="Biochem. Biophys. Res. Commun.">
        <title>A T-to-A substitution in the E1 alpha subunit gene of the branched-chain alpha-ketoacid dehydrogenase complex in two cell lines derived from Menonite maple syrup urine disease patients.</title>
        <authorList>
            <person name="Matsuda I."/>
            <person name="Nobukuni Y."/>
            <person name="Mitsubuchi H."/>
            <person name="Indo Y."/>
            <person name="Endo F."/>
            <person name="Asaka J."/>
            <person name="Harada A."/>
        </authorList>
    </citation>
    <scope>VARIANT MSUD1A ASN-438</scope>
</reference>
<reference key="16">
    <citation type="journal article" date="1991" name="Am. J. Hum. Genet.">
        <title>Occurrence of a Tyr393--&gt;Asn (Y393N) mutation in the E1 alpha gene of the branched-chain alpha-keto acid dehydrogenase complex in maple syrup urine disease patients from a Mennonite population.</title>
        <authorList>
            <person name="Fisher C.R."/>
            <person name="Fisher C.W."/>
            <person name="Chuang D.T."/>
            <person name="Cox R.P."/>
        </authorList>
    </citation>
    <scope>VARIANT MSUD1A ASN-438</scope>
</reference>
<reference key="17">
    <citation type="journal article" date="1991" name="J. Clin. Invest.">
        <title>Maple syrup urine disease in Mennonites. Evidence that the Y393N mutation in E1 alpha impedes assembly of the E1 component of branched-chain alpha-keto acid dehydrogenase complex.</title>
        <authorList>
            <person name="Fisher C.R."/>
            <person name="Chuang J.L."/>
            <person name="Cox R.P."/>
            <person name="Fisher C.W."/>
            <person name="Star R.A."/>
            <person name="Chuang D.T."/>
        </authorList>
    </citation>
    <scope>VARIANT MSUD1A ASN-438</scope>
</reference>
<reference key="18">
    <citation type="journal article" date="1993" name="Biochim. Biophys. Acta">
        <title>Heterogeneity of mutations in maple syrup urine disease (MSUD): screening and identification of affected E1 alpha and E1 beta subunits of the branched-chain alpha-keto-acid dehydrogenase multienzyme complex.</title>
        <authorList>
            <person name="Nobukuni Y."/>
            <person name="Mitsubuchi H."/>
            <person name="Hayashida Y."/>
            <person name="Ohta K."/>
            <person name="Indo Y."/>
            <person name="Ichiba Y."/>
            <person name="Endo F."/>
            <person name="Matsuda I."/>
        </authorList>
    </citation>
    <scope>VARIANTS MSUD1A TRP-159; LYS-190; THR-253 AND THR-326</scope>
</reference>
<reference key="19">
    <citation type="journal article" date="1995" name="J. Clin. Invest.">
        <title>Molecular and biochemical basis of intermediate maple syrup urine disease: occurrence of homozygous G245R and F364C mutations at the E1-alpha locus of Hispanic-Mexican patients.</title>
        <authorList>
            <person name="Chuang J.L."/>
            <person name="Davie J.R."/>
            <person name="Chinsky J.M."/>
            <person name="Wynn R.M."/>
            <person name="Cox R.P."/>
            <person name="Chuang D.T."/>
        </authorList>
    </citation>
    <scope>VARIANTS MSUD1A ARG-290 AND CYS-409</scope>
    <scope>CATALYTIC ACTIVITY</scope>
    <scope>FUNCTION</scope>
    <scope>CHARACTERIZATION OF VARIANTS MSUD1A ARG-290 AND CYS-409</scope>
</reference>
<reference key="20">
    <citation type="journal article" date="1998" name="J. Biol. Chem.">
        <title>Impaired assembly of E1 decarboxylase of the branched-chain alpha-ketoacid dehydrogenase complex in type IA maple syrup urine disease.</title>
        <authorList>
            <person name="Wynn R.M."/>
            <person name="Davie J.R."/>
            <person name="Chuang J.L."/>
            <person name="Cote C.D."/>
            <person name="Chuang D.T."/>
        </authorList>
    </citation>
    <scope>VARIANTS MSUD1A SER-249; TRP-265; SER-267; PRO-285; ARG-290; ARG-310; CYS-409; CYS-413 AND ASN-438</scope>
    <scope>CHARACTERIZATION OF VARIANTS MSUD1A SER-249; TRP-265; SER-267; PRO-285; ARG-290; ARG-310; CYS-409; CYS-413 AND ASN-438</scope>
    <scope>FUNCTION</scope>
    <scope>CATALYTIC ACTIVITY</scope>
    <scope>SUBUNIT</scope>
</reference>
<reference key="21">
    <citation type="journal article" date="2011" name="Ann. Clin. Lab. Sci.">
        <title>Three Korean patients with maple syrup urine disease: four novel mutations in the BCKDHA gene.</title>
        <authorList>
            <person name="Park H.D."/>
            <person name="Lee D.H."/>
            <person name="Hong Y.H."/>
            <person name="Kang D.H."/>
            <person name="Lee Y.K."/>
            <person name="Song J."/>
            <person name="Lee S.Y."/>
            <person name="Kim J.W."/>
            <person name="Ki C.S."/>
            <person name="Lee Y.W."/>
        </authorList>
    </citation>
    <scope>VARIANTS MSUD1A MET-211; VAL-220; CYS-346; LYS-PRO-403 INS AND 427-LEU-ALA-428 DELINS PRO</scope>
</reference>
<sequence>MAVAIAAARVWRLNRGLSQAALLLLRQPGARGLARSHPPRQQQQFSSLDDKPQFPGASAEFIDKLEFIQPNVISGIPIYRVMDRQGQIINPSEDPHLPKEKVLKLYKSMTLLNTMDRILYESQRQGRISFYMTNYGEEGTHVGSAAALDNTDLVFGQYREAGVLMYRDYPLELFMAQCYGNISDLGKGRQMPVHYGCKERHFVTISSPLATQIPQAVGAAYAAKRANANRVVICYFGEGAASEGDAHAGFNFAATLECPIIFFCRNNGYAISTPTSEQYRGDGIAARGPGYGIMSIRVDGNDVFAVYNATKEARRRAVAENQPFLIEAMTYRIGHHSTSDDSSAYRSVDEVNYWDKQDHPISRLRHYLLSQGWWDEEQEKAWRKQSRRKVMEAFEQAERKPKPNPNLLFSDVYQEMPAQLRKQQESLARHLQTYGEHYPLDHFDK</sequence>
<evidence type="ECO:0000250" key="1">
    <source>
        <dbReference type="UniProtKB" id="P50136"/>
    </source>
</evidence>
<evidence type="ECO:0000256" key="2">
    <source>
        <dbReference type="SAM" id="MobiDB-lite"/>
    </source>
</evidence>
<evidence type="ECO:0000269" key="3">
    <source>
    </source>
</evidence>
<evidence type="ECO:0000269" key="4">
    <source>
    </source>
</evidence>
<evidence type="ECO:0000269" key="5">
    <source>
    </source>
</evidence>
<evidence type="ECO:0000269" key="6">
    <source>
    </source>
</evidence>
<evidence type="ECO:0000269" key="7">
    <source>
    </source>
</evidence>
<evidence type="ECO:0000269" key="8">
    <source>
    </source>
</evidence>
<evidence type="ECO:0000269" key="9">
    <source>
    </source>
</evidence>
<evidence type="ECO:0000269" key="10">
    <source>
    </source>
</evidence>
<evidence type="ECO:0000269" key="11">
    <source>
    </source>
</evidence>
<evidence type="ECO:0000269" key="12">
    <source>
    </source>
</evidence>
<evidence type="ECO:0000269" key="13">
    <source>
    </source>
</evidence>
<evidence type="ECO:0000269" key="14">
    <source>
    </source>
</evidence>
<evidence type="ECO:0000269" key="15">
    <source>
    </source>
</evidence>
<evidence type="ECO:0000269" key="16">
    <source>
    </source>
</evidence>
<evidence type="ECO:0000303" key="17">
    <source>
    </source>
</evidence>
<evidence type="ECO:0000303" key="18">
    <source>
    </source>
</evidence>
<evidence type="ECO:0000305" key="19"/>
<evidence type="ECO:0000305" key="20">
    <source>
    </source>
</evidence>
<evidence type="ECO:0000305" key="21">
    <source>
    </source>
</evidence>
<evidence type="ECO:0000312" key="22">
    <source>
        <dbReference type="HGNC" id="HGNC:986"/>
    </source>
</evidence>
<evidence type="ECO:0007744" key="23">
    <source>
        <dbReference type="PDB" id="1DTW"/>
    </source>
</evidence>
<evidence type="ECO:0007829" key="24">
    <source>
        <dbReference type="PDB" id="1DTW"/>
    </source>
</evidence>
<evidence type="ECO:0007829" key="25">
    <source>
        <dbReference type="PDB" id="2BEW"/>
    </source>
</evidence>
<evidence type="ECO:0007829" key="26">
    <source>
        <dbReference type="PDB" id="2BFB"/>
    </source>
</evidence>
<evidence type="ECO:0007829" key="27">
    <source>
        <dbReference type="PDB" id="2BFD"/>
    </source>
</evidence>
<evidence type="ECO:0007829" key="28">
    <source>
        <dbReference type="PDB" id="2BFF"/>
    </source>
</evidence>
<evidence type="ECO:0007829" key="29">
    <source>
        <dbReference type="PDB" id="2J9F"/>
    </source>
</evidence>